<protein>
    <recommendedName>
        <fullName>Protein Vpx</fullName>
    </recommendedName>
    <alternativeName>
        <fullName>Viral protein X</fullName>
    </alternativeName>
    <alternativeName>
        <fullName>X ORF protein</fullName>
    </alternativeName>
</protein>
<dbReference type="EMBL" id="Y00277">
    <property type="protein sequence ID" value="CAA68382.1"/>
    <property type="molecule type" value="Genomic_DNA"/>
</dbReference>
<dbReference type="SMR" id="P05917"/>
<dbReference type="Proteomes" id="UP000007220">
    <property type="component" value="Segment"/>
</dbReference>
<dbReference type="GO" id="GO:0042025">
    <property type="term" value="C:host cell nucleus"/>
    <property type="evidence" value="ECO:0007669"/>
    <property type="project" value="UniProtKB-SubCell"/>
</dbReference>
<dbReference type="GO" id="GO:0044423">
    <property type="term" value="C:virion component"/>
    <property type="evidence" value="ECO:0007669"/>
    <property type="project" value="UniProtKB-KW"/>
</dbReference>
<dbReference type="GO" id="GO:0052170">
    <property type="term" value="P:symbiont-mediated suppression of host innate immune response"/>
    <property type="evidence" value="ECO:0007669"/>
    <property type="project" value="UniProtKB-KW"/>
</dbReference>
<dbReference type="GO" id="GO:0019058">
    <property type="term" value="P:viral life cycle"/>
    <property type="evidence" value="ECO:0007669"/>
    <property type="project" value="InterPro"/>
</dbReference>
<dbReference type="Gene3D" id="1.20.5.4730">
    <property type="match status" value="1"/>
</dbReference>
<dbReference type="InterPro" id="IPR053711">
    <property type="entry name" value="Lentiviral_Vpx_assoc_factor"/>
</dbReference>
<dbReference type="InterPro" id="IPR000012">
    <property type="entry name" value="RetroV_VpR/X"/>
</dbReference>
<dbReference type="Pfam" id="PF00522">
    <property type="entry name" value="VPR"/>
    <property type="match status" value="1"/>
</dbReference>
<feature type="chain" id="PRO_0000085403" description="Protein Vpx">
    <location>
        <begin position="1"/>
        <end position="112"/>
    </location>
</feature>
<feature type="short sequence motif" description="Nuclear localization signal" evidence="1">
    <location>
        <begin position="65"/>
        <end position="72"/>
    </location>
</feature>
<comment type="function">
    <text evidence="1">Plays a role in nuclear translocation of the viral pre-integration complex (PIC), thus is required for the virus to infect non-dividing cells. Targets specific host proteins for degradation by the 26S proteasome. Acts by associating with the cellular CUL4A-DDB1 E3 ligase complex through direct interaction with host VPRPB/DCAF-1. This change in the E3 ligase substrate specificity results in the degradation of host SAMHD1. In turn, SAMHD1 depletion allows viral replication in host myeloid cells by preventing SAMHD1-mediated hydrolysis of intracellular dNTPs necessary for reverse transcription (By similarity).</text>
</comment>
<comment type="subunit">
    <text evidence="1">Interacts with the P6 region of unprocessed GAG. Interacts with host VPRBP/DCAF1, leading to change substrate specificity of the CUL4A-DDB1 E3 ligase complex (By similarity).</text>
</comment>
<comment type="subcellular location">
    <subcellularLocation>
        <location>Virion</location>
    </subcellularLocation>
    <subcellularLocation>
        <location>Host nucleus</location>
    </subcellularLocation>
    <text evidence="1">Nuclear just after virion uncoating, or if expressed in the absence of unprocessed GAG.</text>
</comment>
<comment type="miscellaneous">
    <text>This is a macaque isolate.</text>
</comment>
<comment type="similarity">
    <text evidence="2">Belongs to the lentivirus VPX protein family.</text>
</comment>
<organism>
    <name type="scientific">Simian immunodeficiency virus (isolate Mm142-83)</name>
    <name type="common">SIV-mac</name>
    <name type="synonym">Simian immunodeficiency virus rhesus monkey</name>
    <dbReference type="NCBI Taxonomy" id="11733"/>
    <lineage>
        <taxon>Viruses</taxon>
        <taxon>Riboviria</taxon>
        <taxon>Pararnavirae</taxon>
        <taxon>Artverviricota</taxon>
        <taxon>Revtraviricetes</taxon>
        <taxon>Ortervirales</taxon>
        <taxon>Retroviridae</taxon>
        <taxon>Orthoretrovirinae</taxon>
        <taxon>Lentivirus</taxon>
        <taxon>Simian immunodeficiency virus</taxon>
    </lineage>
</organism>
<gene>
    <name type="primary">vpx</name>
</gene>
<accession>P05917</accession>
<reference key="1">
    <citation type="journal article" date="1987" name="Nature">
        <title>Sequence of simian immunodeficiency virus from macaque and its relationship to other human and simian retroviruses.</title>
        <authorList>
            <person name="Chakrabarti L."/>
            <person name="Guyader M."/>
            <person name="Alizon M."/>
            <person name="Daniel M.D."/>
            <person name="Desrosiers R.C."/>
            <person name="Tiollais P."/>
            <person name="Sonigo P."/>
        </authorList>
    </citation>
    <scope>NUCLEOTIDE SEQUENCE [GENOMIC DNA]</scope>
</reference>
<name>VPX_SIVM1</name>
<sequence length="112" mass="12906">MSDPRERIPPGNSGEETIGEAFEWLNRTVEEINREAVNHLPRELIFQVWQRSWEYWHDEQGMSQSYTKYRYLCLIQKALFMHCKKGCRCLGEGHGAGGWRPGPPPPPPPGLA</sequence>
<keyword id="KW-1048">Host nucleus</keyword>
<keyword id="KW-0945">Host-virus interaction</keyword>
<keyword id="KW-1090">Inhibition of host innate immune response by virus</keyword>
<keyword id="KW-0899">Viral immunoevasion</keyword>
<keyword id="KW-0946">Virion</keyword>
<evidence type="ECO:0000250" key="1"/>
<evidence type="ECO:0000305" key="2"/>
<organismHost>
    <name type="scientific">Cercopithecidae</name>
    <name type="common">Old World monkeys</name>
    <dbReference type="NCBI Taxonomy" id="9527"/>
</organismHost>
<proteinExistence type="inferred from homology"/>